<name>SUCC_ECO5E</name>
<comment type="function">
    <text evidence="1">Succinyl-CoA synthetase functions in the citric acid cycle (TCA), coupling the hydrolysis of succinyl-CoA to the synthesis of either ATP or GTP and thus represents the only step of substrate-level phosphorylation in the TCA. The beta subunit provides nucleotide specificity of the enzyme and binds the substrate succinate, while the binding sites for coenzyme A and phosphate are found in the alpha subunit.</text>
</comment>
<comment type="catalytic activity">
    <reaction evidence="1">
        <text>succinate + ATP + CoA = succinyl-CoA + ADP + phosphate</text>
        <dbReference type="Rhea" id="RHEA:17661"/>
        <dbReference type="ChEBI" id="CHEBI:30031"/>
        <dbReference type="ChEBI" id="CHEBI:30616"/>
        <dbReference type="ChEBI" id="CHEBI:43474"/>
        <dbReference type="ChEBI" id="CHEBI:57287"/>
        <dbReference type="ChEBI" id="CHEBI:57292"/>
        <dbReference type="ChEBI" id="CHEBI:456216"/>
        <dbReference type="EC" id="6.2.1.5"/>
    </reaction>
    <physiologicalReaction direction="right-to-left" evidence="1">
        <dbReference type="Rhea" id="RHEA:17663"/>
    </physiologicalReaction>
</comment>
<comment type="catalytic activity">
    <reaction evidence="1">
        <text>GTP + succinate + CoA = succinyl-CoA + GDP + phosphate</text>
        <dbReference type="Rhea" id="RHEA:22120"/>
        <dbReference type="ChEBI" id="CHEBI:30031"/>
        <dbReference type="ChEBI" id="CHEBI:37565"/>
        <dbReference type="ChEBI" id="CHEBI:43474"/>
        <dbReference type="ChEBI" id="CHEBI:57287"/>
        <dbReference type="ChEBI" id="CHEBI:57292"/>
        <dbReference type="ChEBI" id="CHEBI:58189"/>
    </reaction>
    <physiologicalReaction direction="right-to-left" evidence="1">
        <dbReference type="Rhea" id="RHEA:22122"/>
    </physiologicalReaction>
</comment>
<comment type="cofactor">
    <cofactor evidence="1">
        <name>Mg(2+)</name>
        <dbReference type="ChEBI" id="CHEBI:18420"/>
    </cofactor>
    <text evidence="1">Binds 1 Mg(2+) ion per subunit.</text>
</comment>
<comment type="pathway">
    <text evidence="1">Carbohydrate metabolism; tricarboxylic acid cycle; succinate from succinyl-CoA (ligase route): step 1/1.</text>
</comment>
<comment type="subunit">
    <text evidence="1">Heterotetramer of two alpha and two beta subunits.</text>
</comment>
<comment type="similarity">
    <text evidence="1">Belongs to the succinate/malate CoA ligase beta subunit family.</text>
</comment>
<reference key="1">
    <citation type="journal article" date="2011" name="Proc. Natl. Acad. Sci. U.S.A.">
        <title>Genomic anatomy of Escherichia coli O157:H7 outbreaks.</title>
        <authorList>
            <person name="Eppinger M."/>
            <person name="Mammel M.K."/>
            <person name="Leclerc J.E."/>
            <person name="Ravel J."/>
            <person name="Cebula T.A."/>
        </authorList>
    </citation>
    <scope>NUCLEOTIDE SEQUENCE [LARGE SCALE GENOMIC DNA]</scope>
    <source>
        <strain>EC4115 / EHEC</strain>
    </source>
</reference>
<organism>
    <name type="scientific">Escherichia coli O157:H7 (strain EC4115 / EHEC)</name>
    <dbReference type="NCBI Taxonomy" id="444450"/>
    <lineage>
        <taxon>Bacteria</taxon>
        <taxon>Pseudomonadati</taxon>
        <taxon>Pseudomonadota</taxon>
        <taxon>Gammaproteobacteria</taxon>
        <taxon>Enterobacterales</taxon>
        <taxon>Enterobacteriaceae</taxon>
        <taxon>Escherichia</taxon>
    </lineage>
</organism>
<keyword id="KW-0067">ATP-binding</keyword>
<keyword id="KW-0436">Ligase</keyword>
<keyword id="KW-0460">Magnesium</keyword>
<keyword id="KW-0479">Metal-binding</keyword>
<keyword id="KW-0547">Nucleotide-binding</keyword>
<keyword id="KW-0816">Tricarboxylic acid cycle</keyword>
<evidence type="ECO:0000255" key="1">
    <source>
        <dbReference type="HAMAP-Rule" id="MF_00558"/>
    </source>
</evidence>
<feature type="chain" id="PRO_1000129182" description="Succinate--CoA ligase [ADP-forming] subunit beta">
    <location>
        <begin position="1"/>
        <end position="388"/>
    </location>
</feature>
<feature type="domain" description="ATP-grasp" evidence="1">
    <location>
        <begin position="9"/>
        <end position="244"/>
    </location>
</feature>
<feature type="binding site" evidence="1">
    <location>
        <position position="46"/>
    </location>
    <ligand>
        <name>ATP</name>
        <dbReference type="ChEBI" id="CHEBI:30616"/>
    </ligand>
</feature>
<feature type="binding site" evidence="1">
    <location>
        <begin position="53"/>
        <end position="55"/>
    </location>
    <ligand>
        <name>ATP</name>
        <dbReference type="ChEBI" id="CHEBI:30616"/>
    </ligand>
</feature>
<feature type="binding site" evidence="1">
    <location>
        <position position="99"/>
    </location>
    <ligand>
        <name>ATP</name>
        <dbReference type="ChEBI" id="CHEBI:30616"/>
    </ligand>
</feature>
<feature type="binding site" evidence="1">
    <location>
        <position position="102"/>
    </location>
    <ligand>
        <name>ATP</name>
        <dbReference type="ChEBI" id="CHEBI:30616"/>
    </ligand>
</feature>
<feature type="binding site" evidence="1">
    <location>
        <position position="107"/>
    </location>
    <ligand>
        <name>ATP</name>
        <dbReference type="ChEBI" id="CHEBI:30616"/>
    </ligand>
</feature>
<feature type="binding site" evidence="1">
    <location>
        <position position="199"/>
    </location>
    <ligand>
        <name>Mg(2+)</name>
        <dbReference type="ChEBI" id="CHEBI:18420"/>
    </ligand>
</feature>
<feature type="binding site" evidence="1">
    <location>
        <position position="213"/>
    </location>
    <ligand>
        <name>Mg(2+)</name>
        <dbReference type="ChEBI" id="CHEBI:18420"/>
    </ligand>
</feature>
<feature type="binding site" evidence="1">
    <location>
        <position position="264"/>
    </location>
    <ligand>
        <name>substrate</name>
        <note>ligand shared with subunit alpha</note>
    </ligand>
</feature>
<feature type="binding site" evidence="1">
    <location>
        <begin position="321"/>
        <end position="323"/>
    </location>
    <ligand>
        <name>substrate</name>
        <note>ligand shared with subunit alpha</note>
    </ligand>
</feature>
<gene>
    <name evidence="1" type="primary">sucC</name>
    <name type="ordered locus">ECH74115_0820</name>
</gene>
<sequence length="388" mass="41393">MNLHEYQAKQLFARYGLPAPVGYACTTPREAEEAASKIGAGPWVVKCQVHAGGRGKAGGVKVVNSKEDIRAFAENWLGKRLVTYQTDANGQPVNQILVEAATDIAKELYLGAVVDRSSRRVVFMASTEGGVEIEKVAEETPHLIHKVALDPLTGPMPYQGRELAFKLGLEGKLVQQFTKIFMGLATIFLERDLALIEINPLVITKQGDLICLDGKLGADGNALFRQPDLREMRDQSQEDPREAQAAQWELNYVALDGNIGCMVNGAGLAMGTMDIVKLHGGEPANFLDVGGGATKERVTEAFKIILSDDKVKAVLVNIFGGIVRCDLIADGIIGAVAEVGVNVPVVVRLEGNNAELGAKKLADSGLNIIAAKGLTDAAQQVVAAVEGK</sequence>
<protein>
    <recommendedName>
        <fullName evidence="1">Succinate--CoA ligase [ADP-forming] subunit beta</fullName>
        <ecNumber evidence="1">6.2.1.5</ecNumber>
    </recommendedName>
    <alternativeName>
        <fullName evidence="1">Succinyl-CoA synthetase subunit beta</fullName>
        <shortName evidence="1">SCS-beta</shortName>
    </alternativeName>
</protein>
<accession>B5YQR7</accession>
<dbReference type="EC" id="6.2.1.5" evidence="1"/>
<dbReference type="EMBL" id="CP001164">
    <property type="protein sequence ID" value="ACI36264.1"/>
    <property type="molecule type" value="Genomic_DNA"/>
</dbReference>
<dbReference type="RefSeq" id="WP_001048602.1">
    <property type="nucleotide sequence ID" value="NC_011353.1"/>
</dbReference>
<dbReference type="SMR" id="B5YQR7"/>
<dbReference type="GeneID" id="93776757"/>
<dbReference type="KEGG" id="ecf:ECH74115_0820"/>
<dbReference type="HOGENOM" id="CLU_037430_4_0_6"/>
<dbReference type="UniPathway" id="UPA00223">
    <property type="reaction ID" value="UER00999"/>
</dbReference>
<dbReference type="GO" id="GO:0005829">
    <property type="term" value="C:cytosol"/>
    <property type="evidence" value="ECO:0007669"/>
    <property type="project" value="TreeGrafter"/>
</dbReference>
<dbReference type="GO" id="GO:0042709">
    <property type="term" value="C:succinate-CoA ligase complex"/>
    <property type="evidence" value="ECO:0007669"/>
    <property type="project" value="TreeGrafter"/>
</dbReference>
<dbReference type="GO" id="GO:0005524">
    <property type="term" value="F:ATP binding"/>
    <property type="evidence" value="ECO:0007669"/>
    <property type="project" value="UniProtKB-UniRule"/>
</dbReference>
<dbReference type="GO" id="GO:0000287">
    <property type="term" value="F:magnesium ion binding"/>
    <property type="evidence" value="ECO:0007669"/>
    <property type="project" value="UniProtKB-UniRule"/>
</dbReference>
<dbReference type="GO" id="GO:0004775">
    <property type="term" value="F:succinate-CoA ligase (ADP-forming) activity"/>
    <property type="evidence" value="ECO:0007669"/>
    <property type="project" value="UniProtKB-UniRule"/>
</dbReference>
<dbReference type="GO" id="GO:0004776">
    <property type="term" value="F:succinate-CoA ligase (GDP-forming) activity"/>
    <property type="evidence" value="ECO:0007669"/>
    <property type="project" value="RHEA"/>
</dbReference>
<dbReference type="GO" id="GO:0006104">
    <property type="term" value="P:succinyl-CoA metabolic process"/>
    <property type="evidence" value="ECO:0007669"/>
    <property type="project" value="TreeGrafter"/>
</dbReference>
<dbReference type="GO" id="GO:0006099">
    <property type="term" value="P:tricarboxylic acid cycle"/>
    <property type="evidence" value="ECO:0007669"/>
    <property type="project" value="UniProtKB-UniRule"/>
</dbReference>
<dbReference type="FunFam" id="3.30.1490.20:FF:000002">
    <property type="entry name" value="Succinate--CoA ligase [ADP-forming] subunit beta"/>
    <property type="match status" value="1"/>
</dbReference>
<dbReference type="FunFam" id="3.30.470.20:FF:000002">
    <property type="entry name" value="Succinate--CoA ligase [ADP-forming] subunit beta"/>
    <property type="match status" value="1"/>
</dbReference>
<dbReference type="FunFam" id="3.40.50.261:FF:000001">
    <property type="entry name" value="Succinate--CoA ligase [ADP-forming] subunit beta"/>
    <property type="match status" value="1"/>
</dbReference>
<dbReference type="Gene3D" id="3.30.1490.20">
    <property type="entry name" value="ATP-grasp fold, A domain"/>
    <property type="match status" value="1"/>
</dbReference>
<dbReference type="Gene3D" id="3.30.470.20">
    <property type="entry name" value="ATP-grasp fold, B domain"/>
    <property type="match status" value="1"/>
</dbReference>
<dbReference type="Gene3D" id="3.40.50.261">
    <property type="entry name" value="Succinyl-CoA synthetase domains"/>
    <property type="match status" value="1"/>
</dbReference>
<dbReference type="HAMAP" id="MF_00558">
    <property type="entry name" value="Succ_CoA_beta"/>
    <property type="match status" value="1"/>
</dbReference>
<dbReference type="InterPro" id="IPR011761">
    <property type="entry name" value="ATP-grasp"/>
</dbReference>
<dbReference type="InterPro" id="IPR013650">
    <property type="entry name" value="ATP-grasp_succ-CoA_synth-type"/>
</dbReference>
<dbReference type="InterPro" id="IPR013815">
    <property type="entry name" value="ATP_grasp_subdomain_1"/>
</dbReference>
<dbReference type="InterPro" id="IPR017866">
    <property type="entry name" value="Succ-CoA_synthase_bsu_CS"/>
</dbReference>
<dbReference type="InterPro" id="IPR005811">
    <property type="entry name" value="SUCC_ACL_C"/>
</dbReference>
<dbReference type="InterPro" id="IPR005809">
    <property type="entry name" value="Succ_CoA_ligase-like_bsu"/>
</dbReference>
<dbReference type="InterPro" id="IPR016102">
    <property type="entry name" value="Succinyl-CoA_synth-like"/>
</dbReference>
<dbReference type="NCBIfam" id="NF001913">
    <property type="entry name" value="PRK00696.1"/>
    <property type="match status" value="1"/>
</dbReference>
<dbReference type="NCBIfam" id="TIGR01016">
    <property type="entry name" value="sucCoAbeta"/>
    <property type="match status" value="1"/>
</dbReference>
<dbReference type="PANTHER" id="PTHR11815:SF10">
    <property type="entry name" value="SUCCINATE--COA LIGASE [GDP-FORMING] SUBUNIT BETA, MITOCHONDRIAL"/>
    <property type="match status" value="1"/>
</dbReference>
<dbReference type="PANTHER" id="PTHR11815">
    <property type="entry name" value="SUCCINYL-COA SYNTHETASE BETA CHAIN"/>
    <property type="match status" value="1"/>
</dbReference>
<dbReference type="Pfam" id="PF08442">
    <property type="entry name" value="ATP-grasp_2"/>
    <property type="match status" value="1"/>
</dbReference>
<dbReference type="Pfam" id="PF00549">
    <property type="entry name" value="Ligase_CoA"/>
    <property type="match status" value="1"/>
</dbReference>
<dbReference type="PIRSF" id="PIRSF001554">
    <property type="entry name" value="SucCS_beta"/>
    <property type="match status" value="1"/>
</dbReference>
<dbReference type="SUPFAM" id="SSF56059">
    <property type="entry name" value="Glutathione synthetase ATP-binding domain-like"/>
    <property type="match status" value="1"/>
</dbReference>
<dbReference type="SUPFAM" id="SSF52210">
    <property type="entry name" value="Succinyl-CoA synthetase domains"/>
    <property type="match status" value="1"/>
</dbReference>
<dbReference type="PROSITE" id="PS50975">
    <property type="entry name" value="ATP_GRASP"/>
    <property type="match status" value="1"/>
</dbReference>
<dbReference type="PROSITE" id="PS01217">
    <property type="entry name" value="SUCCINYL_COA_LIG_3"/>
    <property type="match status" value="1"/>
</dbReference>
<proteinExistence type="inferred from homology"/>